<sequence>MSAIVDIIGREILDSRGNPTVECDVLLESGTMGRAAVPSGASTGSREAIELRDGEAGRYNGKGVLKAVEHINTEISEAIMGLDASEQAFLDKTLLELDGTDNKSRLGANAMLAVSMAVAKAAAEEAGLPLYRYFGGSGAMQLPVPMMNIVNGGAHANNSLDIQEFMIVPVSQPTFREALRCGAEVFHALKKILSDRGMSTAVGDEGGFAPNFGSNDECLSTILQAIEKAGYRAGEDVLLALDCAASEFYHDGKYQLAGEGLQLSSAEFTDYLSTLADKFPIVSIEDGMHESDWDGWKLLTDRLGKKVQLVGDDLFVTNTRILKEGIEKGIANSILIKINQIGTLTETFAAIEMAKRASYTAVISHRSGETEDSTIADIAVGLNAGQIKTGSLSRSDRISKYNQLLRIEEDLGDIASYPGKSAFYNLR</sequence>
<reference key="1">
    <citation type="submission" date="2007-10" db="EMBL/GenBank/DDBJ databases">
        <title>Complete sequence of chromosome 1 of Burkholderia multivorans ATCC 17616.</title>
        <authorList>
            <person name="Copeland A."/>
            <person name="Lucas S."/>
            <person name="Lapidus A."/>
            <person name="Barry K."/>
            <person name="Glavina del Rio T."/>
            <person name="Dalin E."/>
            <person name="Tice H."/>
            <person name="Pitluck S."/>
            <person name="Chain P."/>
            <person name="Malfatti S."/>
            <person name="Shin M."/>
            <person name="Vergez L."/>
            <person name="Schmutz J."/>
            <person name="Larimer F."/>
            <person name="Land M."/>
            <person name="Hauser L."/>
            <person name="Kyrpides N."/>
            <person name="Kim E."/>
            <person name="Tiedje J."/>
            <person name="Richardson P."/>
        </authorList>
    </citation>
    <scope>NUCLEOTIDE SEQUENCE [LARGE SCALE GENOMIC DNA]</scope>
    <source>
        <strain>ATCC 17616 / 249</strain>
    </source>
</reference>
<reference key="2">
    <citation type="submission" date="2007-04" db="EMBL/GenBank/DDBJ databases">
        <title>Complete genome sequence of Burkholderia multivorans ATCC 17616.</title>
        <authorList>
            <person name="Ohtsubo Y."/>
            <person name="Yamashita A."/>
            <person name="Kurokawa K."/>
            <person name="Takami H."/>
            <person name="Yuhara S."/>
            <person name="Nishiyama E."/>
            <person name="Endo R."/>
            <person name="Miyazaki R."/>
            <person name="Ono A."/>
            <person name="Yano K."/>
            <person name="Ito M."/>
            <person name="Sota M."/>
            <person name="Yuji N."/>
            <person name="Hattori M."/>
            <person name="Tsuda M."/>
        </authorList>
    </citation>
    <scope>NUCLEOTIDE SEQUENCE [LARGE SCALE GENOMIC DNA]</scope>
    <source>
        <strain>ATCC 17616 / 249</strain>
    </source>
</reference>
<name>ENO_BURM1</name>
<accession>A9AGW2</accession>
<protein>
    <recommendedName>
        <fullName evidence="1">Enolase</fullName>
        <ecNumber evidence="1">4.2.1.11</ecNumber>
    </recommendedName>
    <alternativeName>
        <fullName evidence="1">2-phospho-D-glycerate hydro-lyase</fullName>
    </alternativeName>
    <alternativeName>
        <fullName evidence="1">2-phosphoglycerate dehydratase</fullName>
    </alternativeName>
</protein>
<keyword id="KW-0963">Cytoplasm</keyword>
<keyword id="KW-0324">Glycolysis</keyword>
<keyword id="KW-0456">Lyase</keyword>
<keyword id="KW-0460">Magnesium</keyword>
<keyword id="KW-0479">Metal-binding</keyword>
<keyword id="KW-1185">Reference proteome</keyword>
<keyword id="KW-0964">Secreted</keyword>
<dbReference type="EC" id="4.2.1.11" evidence="1"/>
<dbReference type="EMBL" id="CP000868">
    <property type="protein sequence ID" value="ABX14853.1"/>
    <property type="molecule type" value="Genomic_DNA"/>
</dbReference>
<dbReference type="EMBL" id="AP009385">
    <property type="protein sequence ID" value="BAG43998.1"/>
    <property type="molecule type" value="Genomic_DNA"/>
</dbReference>
<dbReference type="RefSeq" id="WP_006401935.1">
    <property type="nucleotide sequence ID" value="NC_010804.1"/>
</dbReference>
<dbReference type="SMR" id="A9AGW2"/>
<dbReference type="STRING" id="395019.BMULJ_02091"/>
<dbReference type="GeneID" id="89570636"/>
<dbReference type="KEGG" id="bmj:BMULJ_02091"/>
<dbReference type="KEGG" id="bmu:Bmul_1163"/>
<dbReference type="eggNOG" id="COG0148">
    <property type="taxonomic scope" value="Bacteria"/>
</dbReference>
<dbReference type="HOGENOM" id="CLU_031223_2_1_4"/>
<dbReference type="UniPathway" id="UPA00109">
    <property type="reaction ID" value="UER00187"/>
</dbReference>
<dbReference type="Proteomes" id="UP000008815">
    <property type="component" value="Chromosome 1"/>
</dbReference>
<dbReference type="GO" id="GO:0009986">
    <property type="term" value="C:cell surface"/>
    <property type="evidence" value="ECO:0007669"/>
    <property type="project" value="UniProtKB-SubCell"/>
</dbReference>
<dbReference type="GO" id="GO:0005576">
    <property type="term" value="C:extracellular region"/>
    <property type="evidence" value="ECO:0007669"/>
    <property type="project" value="UniProtKB-SubCell"/>
</dbReference>
<dbReference type="GO" id="GO:0000015">
    <property type="term" value="C:phosphopyruvate hydratase complex"/>
    <property type="evidence" value="ECO:0007669"/>
    <property type="project" value="InterPro"/>
</dbReference>
<dbReference type="GO" id="GO:0000287">
    <property type="term" value="F:magnesium ion binding"/>
    <property type="evidence" value="ECO:0007669"/>
    <property type="project" value="UniProtKB-UniRule"/>
</dbReference>
<dbReference type="GO" id="GO:0004634">
    <property type="term" value="F:phosphopyruvate hydratase activity"/>
    <property type="evidence" value="ECO:0007669"/>
    <property type="project" value="UniProtKB-UniRule"/>
</dbReference>
<dbReference type="GO" id="GO:0006096">
    <property type="term" value="P:glycolytic process"/>
    <property type="evidence" value="ECO:0007669"/>
    <property type="project" value="UniProtKB-UniRule"/>
</dbReference>
<dbReference type="CDD" id="cd03313">
    <property type="entry name" value="enolase"/>
    <property type="match status" value="1"/>
</dbReference>
<dbReference type="FunFam" id="3.20.20.120:FF:000001">
    <property type="entry name" value="Enolase"/>
    <property type="match status" value="1"/>
</dbReference>
<dbReference type="FunFam" id="3.30.390.10:FF:000001">
    <property type="entry name" value="Enolase"/>
    <property type="match status" value="1"/>
</dbReference>
<dbReference type="Gene3D" id="3.20.20.120">
    <property type="entry name" value="Enolase-like C-terminal domain"/>
    <property type="match status" value="1"/>
</dbReference>
<dbReference type="Gene3D" id="3.30.390.10">
    <property type="entry name" value="Enolase-like, N-terminal domain"/>
    <property type="match status" value="1"/>
</dbReference>
<dbReference type="HAMAP" id="MF_00318">
    <property type="entry name" value="Enolase"/>
    <property type="match status" value="1"/>
</dbReference>
<dbReference type="InterPro" id="IPR000941">
    <property type="entry name" value="Enolase"/>
</dbReference>
<dbReference type="InterPro" id="IPR036849">
    <property type="entry name" value="Enolase-like_C_sf"/>
</dbReference>
<dbReference type="InterPro" id="IPR029017">
    <property type="entry name" value="Enolase-like_N"/>
</dbReference>
<dbReference type="InterPro" id="IPR020810">
    <property type="entry name" value="Enolase_C"/>
</dbReference>
<dbReference type="InterPro" id="IPR020809">
    <property type="entry name" value="Enolase_CS"/>
</dbReference>
<dbReference type="InterPro" id="IPR020811">
    <property type="entry name" value="Enolase_N"/>
</dbReference>
<dbReference type="NCBIfam" id="TIGR01060">
    <property type="entry name" value="eno"/>
    <property type="match status" value="1"/>
</dbReference>
<dbReference type="PANTHER" id="PTHR11902">
    <property type="entry name" value="ENOLASE"/>
    <property type="match status" value="1"/>
</dbReference>
<dbReference type="PANTHER" id="PTHR11902:SF1">
    <property type="entry name" value="ENOLASE"/>
    <property type="match status" value="1"/>
</dbReference>
<dbReference type="Pfam" id="PF00113">
    <property type="entry name" value="Enolase_C"/>
    <property type="match status" value="1"/>
</dbReference>
<dbReference type="Pfam" id="PF03952">
    <property type="entry name" value="Enolase_N"/>
    <property type="match status" value="1"/>
</dbReference>
<dbReference type="PIRSF" id="PIRSF001400">
    <property type="entry name" value="Enolase"/>
    <property type="match status" value="1"/>
</dbReference>
<dbReference type="PRINTS" id="PR00148">
    <property type="entry name" value="ENOLASE"/>
</dbReference>
<dbReference type="SFLD" id="SFLDF00002">
    <property type="entry name" value="enolase"/>
    <property type="match status" value="1"/>
</dbReference>
<dbReference type="SFLD" id="SFLDG00178">
    <property type="entry name" value="enolase"/>
    <property type="match status" value="1"/>
</dbReference>
<dbReference type="SMART" id="SM01192">
    <property type="entry name" value="Enolase_C"/>
    <property type="match status" value="1"/>
</dbReference>
<dbReference type="SMART" id="SM01193">
    <property type="entry name" value="Enolase_N"/>
    <property type="match status" value="1"/>
</dbReference>
<dbReference type="SUPFAM" id="SSF51604">
    <property type="entry name" value="Enolase C-terminal domain-like"/>
    <property type="match status" value="1"/>
</dbReference>
<dbReference type="SUPFAM" id="SSF54826">
    <property type="entry name" value="Enolase N-terminal domain-like"/>
    <property type="match status" value="1"/>
</dbReference>
<dbReference type="PROSITE" id="PS00164">
    <property type="entry name" value="ENOLASE"/>
    <property type="match status" value="1"/>
</dbReference>
<evidence type="ECO:0000255" key="1">
    <source>
        <dbReference type="HAMAP-Rule" id="MF_00318"/>
    </source>
</evidence>
<proteinExistence type="inferred from homology"/>
<comment type="function">
    <text evidence="1">Catalyzes the reversible conversion of 2-phosphoglycerate (2-PG) into phosphoenolpyruvate (PEP). It is essential for the degradation of carbohydrates via glycolysis.</text>
</comment>
<comment type="catalytic activity">
    <reaction evidence="1">
        <text>(2R)-2-phosphoglycerate = phosphoenolpyruvate + H2O</text>
        <dbReference type="Rhea" id="RHEA:10164"/>
        <dbReference type="ChEBI" id="CHEBI:15377"/>
        <dbReference type="ChEBI" id="CHEBI:58289"/>
        <dbReference type="ChEBI" id="CHEBI:58702"/>
        <dbReference type="EC" id="4.2.1.11"/>
    </reaction>
</comment>
<comment type="cofactor">
    <cofactor evidence="1">
        <name>Mg(2+)</name>
        <dbReference type="ChEBI" id="CHEBI:18420"/>
    </cofactor>
    <text evidence="1">Binds a second Mg(2+) ion via substrate during catalysis.</text>
</comment>
<comment type="pathway">
    <text evidence="1">Carbohydrate degradation; glycolysis; pyruvate from D-glyceraldehyde 3-phosphate: step 4/5.</text>
</comment>
<comment type="subcellular location">
    <subcellularLocation>
        <location evidence="1">Cytoplasm</location>
    </subcellularLocation>
    <subcellularLocation>
        <location evidence="1">Secreted</location>
    </subcellularLocation>
    <subcellularLocation>
        <location evidence="1">Cell surface</location>
    </subcellularLocation>
    <text evidence="1">Fractions of enolase are present in both the cytoplasm and on the cell surface.</text>
</comment>
<comment type="similarity">
    <text evidence="1">Belongs to the enolase family.</text>
</comment>
<organism>
    <name type="scientific">Burkholderia multivorans (strain ATCC 17616 / 249)</name>
    <dbReference type="NCBI Taxonomy" id="395019"/>
    <lineage>
        <taxon>Bacteria</taxon>
        <taxon>Pseudomonadati</taxon>
        <taxon>Pseudomonadota</taxon>
        <taxon>Betaproteobacteria</taxon>
        <taxon>Burkholderiales</taxon>
        <taxon>Burkholderiaceae</taxon>
        <taxon>Burkholderia</taxon>
        <taxon>Burkholderia cepacia complex</taxon>
    </lineage>
</organism>
<gene>
    <name evidence="1" type="primary">eno</name>
    <name type="ordered locus">Bmul_1163</name>
    <name type="ordered locus">BMULJ_02091</name>
</gene>
<feature type="chain" id="PRO_1000115839" description="Enolase">
    <location>
        <begin position="1"/>
        <end position="427"/>
    </location>
</feature>
<feature type="active site" description="Proton donor" evidence="1">
    <location>
        <position position="205"/>
    </location>
</feature>
<feature type="active site" description="Proton acceptor" evidence="1">
    <location>
        <position position="337"/>
    </location>
</feature>
<feature type="binding site" evidence="1">
    <location>
        <position position="163"/>
    </location>
    <ligand>
        <name>(2R)-2-phosphoglycerate</name>
        <dbReference type="ChEBI" id="CHEBI:58289"/>
    </ligand>
</feature>
<feature type="binding site" evidence="1">
    <location>
        <position position="242"/>
    </location>
    <ligand>
        <name>Mg(2+)</name>
        <dbReference type="ChEBI" id="CHEBI:18420"/>
    </ligand>
</feature>
<feature type="binding site" evidence="1">
    <location>
        <position position="285"/>
    </location>
    <ligand>
        <name>Mg(2+)</name>
        <dbReference type="ChEBI" id="CHEBI:18420"/>
    </ligand>
</feature>
<feature type="binding site" evidence="1">
    <location>
        <position position="312"/>
    </location>
    <ligand>
        <name>Mg(2+)</name>
        <dbReference type="ChEBI" id="CHEBI:18420"/>
    </ligand>
</feature>
<feature type="binding site" evidence="1">
    <location>
        <position position="337"/>
    </location>
    <ligand>
        <name>(2R)-2-phosphoglycerate</name>
        <dbReference type="ChEBI" id="CHEBI:58289"/>
    </ligand>
</feature>
<feature type="binding site" evidence="1">
    <location>
        <position position="366"/>
    </location>
    <ligand>
        <name>(2R)-2-phosphoglycerate</name>
        <dbReference type="ChEBI" id="CHEBI:58289"/>
    </ligand>
</feature>
<feature type="binding site" evidence="1">
    <location>
        <position position="367"/>
    </location>
    <ligand>
        <name>(2R)-2-phosphoglycerate</name>
        <dbReference type="ChEBI" id="CHEBI:58289"/>
    </ligand>
</feature>
<feature type="binding site" evidence="1">
    <location>
        <position position="388"/>
    </location>
    <ligand>
        <name>(2R)-2-phosphoglycerate</name>
        <dbReference type="ChEBI" id="CHEBI:58289"/>
    </ligand>
</feature>